<organism>
    <name type="scientific">Clostridium beijerinckii (strain ATCC 51743 / NCIMB 8052)</name>
    <name type="common">Clostridium acetobutylicum</name>
    <dbReference type="NCBI Taxonomy" id="290402"/>
    <lineage>
        <taxon>Bacteria</taxon>
        <taxon>Bacillati</taxon>
        <taxon>Bacillota</taxon>
        <taxon>Clostridia</taxon>
        <taxon>Eubacteriales</taxon>
        <taxon>Clostridiaceae</taxon>
        <taxon>Clostridium</taxon>
    </lineage>
</organism>
<accession>A6LSV5</accession>
<protein>
    <recommendedName>
        <fullName evidence="1">Lon protease</fullName>
        <ecNumber evidence="1">3.4.21.53</ecNumber>
    </recommendedName>
    <alternativeName>
        <fullName evidence="1">ATP-dependent protease La</fullName>
    </alternativeName>
</protein>
<keyword id="KW-0067">ATP-binding</keyword>
<keyword id="KW-0963">Cytoplasm</keyword>
<keyword id="KW-0378">Hydrolase</keyword>
<keyword id="KW-0547">Nucleotide-binding</keyword>
<keyword id="KW-0645">Protease</keyword>
<keyword id="KW-0720">Serine protease</keyword>
<keyword id="KW-0346">Stress response</keyword>
<name>LON_CLOB8</name>
<reference key="1">
    <citation type="submission" date="2007-06" db="EMBL/GenBank/DDBJ databases">
        <title>Complete sequence of Clostridium beijerinckii NCIMB 8052.</title>
        <authorList>
            <consortium name="US DOE Joint Genome Institute"/>
            <person name="Copeland A."/>
            <person name="Lucas S."/>
            <person name="Lapidus A."/>
            <person name="Barry K."/>
            <person name="Detter J.C."/>
            <person name="Glavina del Rio T."/>
            <person name="Hammon N."/>
            <person name="Israni S."/>
            <person name="Dalin E."/>
            <person name="Tice H."/>
            <person name="Pitluck S."/>
            <person name="Sims D."/>
            <person name="Brettin T."/>
            <person name="Bruce D."/>
            <person name="Tapia R."/>
            <person name="Brainard J."/>
            <person name="Schmutz J."/>
            <person name="Larimer F."/>
            <person name="Land M."/>
            <person name="Hauser L."/>
            <person name="Kyrpides N."/>
            <person name="Mikhailova N."/>
            <person name="Bennet G."/>
            <person name="Cann I."/>
            <person name="Chen J.-S."/>
            <person name="Contreras A.L."/>
            <person name="Jones D."/>
            <person name="Kashket E."/>
            <person name="Mitchell W."/>
            <person name="Stoddard S."/>
            <person name="Schwarz W."/>
            <person name="Qureshi N."/>
            <person name="Young M."/>
            <person name="Shi Z."/>
            <person name="Ezeji T."/>
            <person name="White B."/>
            <person name="Blaschek H."/>
            <person name="Richardson P."/>
        </authorList>
    </citation>
    <scope>NUCLEOTIDE SEQUENCE [LARGE SCALE GENOMIC DNA]</scope>
    <source>
        <strain>ATCC 51743 / NCIMB 8052</strain>
    </source>
</reference>
<evidence type="ECO:0000255" key="1">
    <source>
        <dbReference type="HAMAP-Rule" id="MF_01973"/>
    </source>
</evidence>
<evidence type="ECO:0000255" key="2">
    <source>
        <dbReference type="PROSITE-ProRule" id="PRU01122"/>
    </source>
</evidence>
<evidence type="ECO:0000255" key="3">
    <source>
        <dbReference type="PROSITE-ProRule" id="PRU01123"/>
    </source>
</evidence>
<comment type="function">
    <text evidence="1">ATP-dependent serine protease that mediates the selective degradation of mutant and abnormal proteins as well as certain short-lived regulatory proteins. Required for cellular homeostasis and for survival from DNA damage and developmental changes induced by stress. Degrades polypeptides processively to yield small peptide fragments that are 5 to 10 amino acids long. Binds to DNA in a double-stranded, site-specific manner.</text>
</comment>
<comment type="catalytic activity">
    <reaction evidence="1">
        <text>Hydrolysis of proteins in presence of ATP.</text>
        <dbReference type="EC" id="3.4.21.53"/>
    </reaction>
</comment>
<comment type="subunit">
    <text evidence="1">Homohexamer. Organized in a ring with a central cavity.</text>
</comment>
<comment type="subcellular location">
    <subcellularLocation>
        <location evidence="1">Cytoplasm</location>
    </subcellularLocation>
</comment>
<comment type="induction">
    <text evidence="1">By heat shock.</text>
</comment>
<comment type="similarity">
    <text evidence="1">Belongs to the peptidase S16 family.</text>
</comment>
<gene>
    <name evidence="1" type="primary">lon</name>
    <name type="ordered locus">Cbei_1254</name>
</gene>
<dbReference type="EC" id="3.4.21.53" evidence="1"/>
<dbReference type="EMBL" id="CP000721">
    <property type="protein sequence ID" value="ABR33435.1"/>
    <property type="molecule type" value="Genomic_DNA"/>
</dbReference>
<dbReference type="RefSeq" id="WP_011968589.1">
    <property type="nucleotide sequence ID" value="NC_009617.1"/>
</dbReference>
<dbReference type="SMR" id="A6LSV5"/>
<dbReference type="KEGG" id="cbe:Cbei_1254"/>
<dbReference type="eggNOG" id="COG0466">
    <property type="taxonomic scope" value="Bacteria"/>
</dbReference>
<dbReference type="HOGENOM" id="CLU_004109_4_3_9"/>
<dbReference type="Proteomes" id="UP000000565">
    <property type="component" value="Chromosome"/>
</dbReference>
<dbReference type="GO" id="GO:0005737">
    <property type="term" value="C:cytoplasm"/>
    <property type="evidence" value="ECO:0007669"/>
    <property type="project" value="UniProtKB-SubCell"/>
</dbReference>
<dbReference type="GO" id="GO:0005524">
    <property type="term" value="F:ATP binding"/>
    <property type="evidence" value="ECO:0007669"/>
    <property type="project" value="UniProtKB-UniRule"/>
</dbReference>
<dbReference type="GO" id="GO:0016887">
    <property type="term" value="F:ATP hydrolysis activity"/>
    <property type="evidence" value="ECO:0007669"/>
    <property type="project" value="UniProtKB-UniRule"/>
</dbReference>
<dbReference type="GO" id="GO:0004176">
    <property type="term" value="F:ATP-dependent peptidase activity"/>
    <property type="evidence" value="ECO:0007669"/>
    <property type="project" value="UniProtKB-UniRule"/>
</dbReference>
<dbReference type="GO" id="GO:0043565">
    <property type="term" value="F:sequence-specific DNA binding"/>
    <property type="evidence" value="ECO:0007669"/>
    <property type="project" value="UniProtKB-UniRule"/>
</dbReference>
<dbReference type="GO" id="GO:0004252">
    <property type="term" value="F:serine-type endopeptidase activity"/>
    <property type="evidence" value="ECO:0007669"/>
    <property type="project" value="UniProtKB-UniRule"/>
</dbReference>
<dbReference type="GO" id="GO:0034605">
    <property type="term" value="P:cellular response to heat"/>
    <property type="evidence" value="ECO:0007669"/>
    <property type="project" value="UniProtKB-UniRule"/>
</dbReference>
<dbReference type="GO" id="GO:0006515">
    <property type="term" value="P:protein quality control for misfolded or incompletely synthesized proteins"/>
    <property type="evidence" value="ECO:0007669"/>
    <property type="project" value="UniProtKB-UniRule"/>
</dbReference>
<dbReference type="CDD" id="cd19500">
    <property type="entry name" value="RecA-like_Lon"/>
    <property type="match status" value="1"/>
</dbReference>
<dbReference type="FunFam" id="1.20.5.5270:FF:000002">
    <property type="entry name" value="Lon protease homolog"/>
    <property type="match status" value="1"/>
</dbReference>
<dbReference type="FunFam" id="3.40.50.300:FF:000382">
    <property type="entry name" value="Lon protease homolog 2, peroxisomal"/>
    <property type="match status" value="1"/>
</dbReference>
<dbReference type="Gene3D" id="1.10.8.60">
    <property type="match status" value="1"/>
</dbReference>
<dbReference type="Gene3D" id="1.20.5.5270">
    <property type="match status" value="1"/>
</dbReference>
<dbReference type="Gene3D" id="1.20.58.1480">
    <property type="match status" value="1"/>
</dbReference>
<dbReference type="Gene3D" id="3.30.230.10">
    <property type="match status" value="1"/>
</dbReference>
<dbReference type="Gene3D" id="2.30.130.40">
    <property type="entry name" value="LON domain-like"/>
    <property type="match status" value="1"/>
</dbReference>
<dbReference type="Gene3D" id="3.40.50.300">
    <property type="entry name" value="P-loop containing nucleotide triphosphate hydrolases"/>
    <property type="match status" value="1"/>
</dbReference>
<dbReference type="HAMAP" id="MF_01973">
    <property type="entry name" value="lon_bact"/>
    <property type="match status" value="1"/>
</dbReference>
<dbReference type="InterPro" id="IPR003593">
    <property type="entry name" value="AAA+_ATPase"/>
</dbReference>
<dbReference type="InterPro" id="IPR003959">
    <property type="entry name" value="ATPase_AAA_core"/>
</dbReference>
<dbReference type="InterPro" id="IPR027543">
    <property type="entry name" value="Lon_bac"/>
</dbReference>
<dbReference type="InterPro" id="IPR004815">
    <property type="entry name" value="Lon_bac/euk-typ"/>
</dbReference>
<dbReference type="InterPro" id="IPR054594">
    <property type="entry name" value="Lon_lid"/>
</dbReference>
<dbReference type="InterPro" id="IPR008269">
    <property type="entry name" value="Lon_proteolytic"/>
</dbReference>
<dbReference type="InterPro" id="IPR027065">
    <property type="entry name" value="Lon_Prtase"/>
</dbReference>
<dbReference type="InterPro" id="IPR003111">
    <property type="entry name" value="Lon_prtase_N"/>
</dbReference>
<dbReference type="InterPro" id="IPR046336">
    <property type="entry name" value="Lon_prtase_N_sf"/>
</dbReference>
<dbReference type="InterPro" id="IPR027417">
    <property type="entry name" value="P-loop_NTPase"/>
</dbReference>
<dbReference type="InterPro" id="IPR008268">
    <property type="entry name" value="Peptidase_S16_AS"/>
</dbReference>
<dbReference type="InterPro" id="IPR015947">
    <property type="entry name" value="PUA-like_sf"/>
</dbReference>
<dbReference type="InterPro" id="IPR020568">
    <property type="entry name" value="Ribosomal_Su5_D2-typ_SF"/>
</dbReference>
<dbReference type="InterPro" id="IPR014721">
    <property type="entry name" value="Ribsml_uS5_D2-typ_fold_subgr"/>
</dbReference>
<dbReference type="NCBIfam" id="TIGR00763">
    <property type="entry name" value="lon"/>
    <property type="match status" value="1"/>
</dbReference>
<dbReference type="PANTHER" id="PTHR10046">
    <property type="entry name" value="ATP DEPENDENT LON PROTEASE FAMILY MEMBER"/>
    <property type="match status" value="1"/>
</dbReference>
<dbReference type="Pfam" id="PF00004">
    <property type="entry name" value="AAA"/>
    <property type="match status" value="1"/>
</dbReference>
<dbReference type="Pfam" id="PF05362">
    <property type="entry name" value="Lon_C"/>
    <property type="match status" value="1"/>
</dbReference>
<dbReference type="Pfam" id="PF22667">
    <property type="entry name" value="Lon_lid"/>
    <property type="match status" value="1"/>
</dbReference>
<dbReference type="Pfam" id="PF02190">
    <property type="entry name" value="LON_substr_bdg"/>
    <property type="match status" value="1"/>
</dbReference>
<dbReference type="PIRSF" id="PIRSF001174">
    <property type="entry name" value="Lon_proteas"/>
    <property type="match status" value="1"/>
</dbReference>
<dbReference type="PRINTS" id="PR00830">
    <property type="entry name" value="ENDOLAPTASE"/>
</dbReference>
<dbReference type="SMART" id="SM00382">
    <property type="entry name" value="AAA"/>
    <property type="match status" value="1"/>
</dbReference>
<dbReference type="SMART" id="SM00464">
    <property type="entry name" value="LON"/>
    <property type="match status" value="1"/>
</dbReference>
<dbReference type="SUPFAM" id="SSF52540">
    <property type="entry name" value="P-loop containing nucleoside triphosphate hydrolases"/>
    <property type="match status" value="1"/>
</dbReference>
<dbReference type="SUPFAM" id="SSF88697">
    <property type="entry name" value="PUA domain-like"/>
    <property type="match status" value="1"/>
</dbReference>
<dbReference type="SUPFAM" id="SSF54211">
    <property type="entry name" value="Ribosomal protein S5 domain 2-like"/>
    <property type="match status" value="1"/>
</dbReference>
<dbReference type="PROSITE" id="PS51787">
    <property type="entry name" value="LON_N"/>
    <property type="match status" value="1"/>
</dbReference>
<dbReference type="PROSITE" id="PS51786">
    <property type="entry name" value="LON_PROTEOLYTIC"/>
    <property type="match status" value="1"/>
</dbReference>
<dbReference type="PROSITE" id="PS01046">
    <property type="entry name" value="LON_SER"/>
    <property type="match status" value="1"/>
</dbReference>
<feature type="chain" id="PRO_0000396547" description="Lon protease">
    <location>
        <begin position="1"/>
        <end position="795"/>
    </location>
</feature>
<feature type="domain" description="Lon N-terminal" evidence="3">
    <location>
        <begin position="11"/>
        <end position="203"/>
    </location>
</feature>
<feature type="domain" description="Lon proteolytic" evidence="2">
    <location>
        <begin position="593"/>
        <end position="771"/>
    </location>
</feature>
<feature type="active site" evidence="1">
    <location>
        <position position="677"/>
    </location>
</feature>
<feature type="active site" evidence="1">
    <location>
        <position position="720"/>
    </location>
</feature>
<feature type="binding site" evidence="1">
    <location>
        <begin position="356"/>
        <end position="363"/>
    </location>
    <ligand>
        <name>ATP</name>
        <dbReference type="ChEBI" id="CHEBI:30616"/>
    </ligand>
</feature>
<sequence>MINLDDKNNIGRVIPVSDIVLLPGMYHTLKFNKFSETQIESLSDEDIVNIALPLKQNFGQSKLKEEDFHRVGVTFQVNAIEKTEKGYKAEIKILDRVEIKTFSIEEDSIKAEFEFAPDIIDLTEKSKDEMVEYIKKVTREISENFKGSEKFMLAVEGQKDLNKLMGYLSHFMQISSEEKYDLLETQSLKDRGLKFIDYLLKQKESLKLQFELAEKFTEKANKNYRETVLREQLKAIQEELNEGKSSPSKKDKNYLNRIEEAQMPDEIKEVALEELGKLESQSPNSAEYNVIKNYLELLIQLPWKKQEFKDIDLEEARRILDEQHYGLEKVKDRIIQHLAVMQLKNDKKGSILLLVGPPGVGKTSLGKSIAEALNRKYVRLSLGGVRDEAEIRGHRRTYVGAMPGRIIQSIKKAGEINPVMVLDEVDKLMASYNGDPASALLEVLDPEQNDTFTDHYLDVPYDLSNVFFIATANSLDTIPRPLLDRMEVIQISSYTMNEKFHIGKNHLISAVLEEHGLNDTQLVIEDAALERIISEYTLEAGVRGLKKQIATIARIASEKIVSNKVELPFKVKEDDLEDLLGRKVSSHDKAQDDNVPGVVTGLAWTSVGGEILFIEATGMLGSGQIVLTGQLGDVMKESAQISLSLLKSRLPINAINFRERDIHIHVPSGSVPKDGPSAGIALFTALASLVTGIKVDSKLAMTGEITLRGAVLPIGGLKEKLLGAQRAGITKVLIPKDNVVDLNEVPQEVKEQLTIIAVETVEDVLRETLGISLPRIEHIFNPNKFIEGTFKPAEE</sequence>
<proteinExistence type="inferred from homology"/>